<feature type="chain" id="PRO_0000446410" description="Geissoschizine oxidase">
    <location>
        <begin position="1"/>
        <end position="501"/>
    </location>
</feature>
<feature type="transmembrane region" description="Helical" evidence="2">
    <location>
        <begin position="1"/>
        <end position="21"/>
    </location>
</feature>
<feature type="binding site" description="axial binding residue" evidence="1">
    <location>
        <position position="442"/>
    </location>
    <ligand>
        <name>heme</name>
        <dbReference type="ChEBI" id="CHEBI:30413"/>
    </ligand>
    <ligandPart>
        <name>Fe</name>
        <dbReference type="ChEBI" id="CHEBI:18248"/>
    </ligandPart>
</feature>
<feature type="glycosylation site" description="N-linked (GlcNAc...) asparagine" evidence="3">
    <location>
        <position position="60"/>
    </location>
</feature>
<protein>
    <recommendedName>
        <fullName evidence="10 11">Geissoschizine oxidase</fullName>
        <shortName evidence="11">CrGO</shortName>
        <ecNumber evidence="5 13">1.14.19.80</ecNumber>
    </recommendedName>
    <alternativeName>
        <fullName evidence="9">Cytochrome P450 71AY2</fullName>
        <shortName evidence="9">CYP71AY2</shortName>
    </alternativeName>
    <alternativeName>
        <fullName evidence="8">Cytochrome P450 71D1V1</fullName>
        <shortName evidence="8 10">CYP71D1V1</shortName>
    </alternativeName>
</protein>
<keyword id="KW-0325">Glycoprotein</keyword>
<keyword id="KW-0349">Heme</keyword>
<keyword id="KW-0408">Iron</keyword>
<keyword id="KW-0472">Membrane</keyword>
<keyword id="KW-0479">Metal-binding</keyword>
<keyword id="KW-0503">Monooxygenase</keyword>
<keyword id="KW-0560">Oxidoreductase</keyword>
<keyword id="KW-0812">Transmembrane</keyword>
<keyword id="KW-1133">Transmembrane helix</keyword>
<evidence type="ECO:0000250" key="1">
    <source>
        <dbReference type="UniProtKB" id="P04798"/>
    </source>
</evidence>
<evidence type="ECO:0000255" key="2"/>
<evidence type="ECO:0000255" key="3">
    <source>
        <dbReference type="PROSITE-ProRule" id="PRU00498"/>
    </source>
</evidence>
<evidence type="ECO:0000269" key="4">
    <source>
    </source>
</evidence>
<evidence type="ECO:0000269" key="5">
    <source>
    </source>
</evidence>
<evidence type="ECO:0000269" key="6">
    <source>
    </source>
</evidence>
<evidence type="ECO:0000269" key="7">
    <source>
    </source>
</evidence>
<evidence type="ECO:0000303" key="8">
    <source>
    </source>
</evidence>
<evidence type="ECO:0000303" key="9">
    <source>
    </source>
</evidence>
<evidence type="ECO:0000303" key="10">
    <source>
    </source>
</evidence>
<evidence type="ECO:0000303" key="11">
    <source>
    </source>
</evidence>
<evidence type="ECO:0000305" key="12"/>
<evidence type="ECO:0000305" key="13">
    <source>
    </source>
</evidence>
<proteinExistence type="evidence at protein level"/>
<gene>
    <name evidence="10 11" type="primary">GO</name>
    <name evidence="9" type="synonym">CYP71AY2</name>
    <name evidence="8" type="synonym">CYP71D1V1</name>
    <name evidence="9" type="ORF">Caros007686</name>
</gene>
<reference key="1">
    <citation type="journal article" date="2012" name="Planta">
        <title>Molecular characterization of the pentacyclic triterpenoid biosynthetic pathway in Catharanthus roseus.</title>
        <authorList>
            <person name="Huang L."/>
            <person name="Li J."/>
            <person name="Ye H."/>
            <person name="Li C."/>
            <person name="Wang H."/>
            <person name="Liu B."/>
            <person name="Zhang Y."/>
        </authorList>
    </citation>
    <scope>NUCLEOTIDE SEQUENCE [MRNA]</scope>
    <source>
        <strain>cv. Wuhan Garden</strain>
    </source>
</reference>
<reference key="2">
    <citation type="journal article" date="2014" name="Nat. Commun.">
        <title>The seco-iridoid pathway from Catharanthus roseus.</title>
        <authorList>
            <person name="Miettinen K."/>
            <person name="Dong L."/>
            <person name="Navrot N."/>
            <person name="Schneider T."/>
            <person name="Burlat V."/>
            <person name="Pollier J."/>
            <person name="Woittiez L."/>
            <person name="van der Krol S."/>
            <person name="Lugan R."/>
            <person name="Ilc T."/>
            <person name="Verpoorte R."/>
            <person name="Oksman-Caldentey K.M."/>
            <person name="Martinoia E."/>
            <person name="Bouwmeester H."/>
            <person name="Goossens A."/>
            <person name="Memelink J."/>
            <person name="Werck-Reichhart D."/>
        </authorList>
    </citation>
    <scope>NUCLEOTIDE SEQUENCE [MRNA]</scope>
    <scope>TISSUE SPECIFICITY</scope>
    <source>
        <strain>cv. Little Bright Eyes</strain>
    </source>
</reference>
<reference key="3">
    <citation type="journal article" date="2017" name="Nat. Commun.">
        <title>A three enzyme system to generate the strychnos alkaloid scaffold from a central biosynthetic intermediate.</title>
        <authorList>
            <person name="Tatsis E.C."/>
            <person name="Carqueijeiro I."/>
            <person name="Duge de Bernonville T."/>
            <person name="Franke J."/>
            <person name="Dang T.-T.T."/>
            <person name="Oudin A."/>
            <person name="Lanoue A."/>
            <person name="Lafontaine F."/>
            <person name="Stavrinides A.K."/>
            <person name="Clastre M."/>
            <person name="Courdavault V."/>
            <person name="O'Connor S.E."/>
        </authorList>
    </citation>
    <scope>FUNCTION</scope>
    <scope>CATALYTIC ACTIVITY</scope>
    <scope>PATHWAY</scope>
</reference>
<reference key="4">
    <citation type="journal article" date="2018" name="Proc. Natl. Acad. Sci. U.S.A.">
        <title>Solution of the multistep pathway for assembly of corynanthean, strychnos, iboga, and aspidosperma monoterpenoid indole alkaloids from 19E-geissoschizine.</title>
        <authorList>
            <person name="Qu Y."/>
            <person name="Easson M.E.A.M."/>
            <person name="Simionescu R."/>
            <person name="Hajicek J."/>
            <person name="Thamm A.M.K."/>
            <person name="Salim V."/>
            <person name="De Luca V."/>
        </authorList>
    </citation>
    <scope>NUCLEOTIDE SEQUENCE [MRNA]</scope>
    <scope>FUNCTION</scope>
    <scope>DISRUPTION PHENOTYPE</scope>
    <scope>CATALYTIC ACTIVITY</scope>
    <scope>PATHWAY</scope>
</reference>
<reference key="5">
    <citation type="journal article" date="2019" name="Plant J.">
        <title>Completion of the canonical pathway for assembly of anticancer drugs vincristine/vinblastine in Catharanthus roseus.</title>
        <authorList>
            <person name="Qu Y."/>
            <person name="Safonova O."/>
            <person name="De Luca V."/>
        </authorList>
    </citation>
    <scope>TISSUE SPECIFICITY</scope>
    <source>
        <strain>cv. Little Delicata</strain>
    </source>
</reference>
<organism>
    <name type="scientific">Catharanthus roseus</name>
    <name type="common">Madagascar periwinkle</name>
    <name type="synonym">Vinca rosea</name>
    <dbReference type="NCBI Taxonomy" id="4058"/>
    <lineage>
        <taxon>Eukaryota</taxon>
        <taxon>Viridiplantae</taxon>
        <taxon>Streptophyta</taxon>
        <taxon>Embryophyta</taxon>
        <taxon>Tracheophyta</taxon>
        <taxon>Spermatophyta</taxon>
        <taxon>Magnoliopsida</taxon>
        <taxon>eudicotyledons</taxon>
        <taxon>Gunneridae</taxon>
        <taxon>Pentapetalae</taxon>
        <taxon>asterids</taxon>
        <taxon>lamiids</taxon>
        <taxon>Gentianales</taxon>
        <taxon>Apocynaceae</taxon>
        <taxon>Rauvolfioideae</taxon>
        <taxon>Vinceae</taxon>
        <taxon>Catharanthinae</taxon>
        <taxon>Catharanthus</taxon>
    </lineage>
</organism>
<comment type="function">
    <text evidence="5 6">Component of the seco-iridoid and derivatives monoterpenoid indole alkaloids (MIAs, e.g. vincristine, quinine, and strychnine) biosynthesis pathway (PubMed:29511102). Catalyzes the oxidation of 19E-geissoschizine to produce a short-lived MIA unstable intermediate which can be spontaneously converted into akuammicine or oxidized by Redox1 and Redox2 to produce stemmadenine and 16S/R-deshydroxymethylstemmadenine (16S/R-DHS) (PubMed:28827772, PubMed:29511102).</text>
</comment>
<comment type="catalytic activity">
    <reaction evidence="5 6">
        <text>(19E)-geissoschizine + reduced [NADPH--hemoprotein reductase] + O2 = akuammicine + formate + oxidized [NADPH--hemoprotein reductase] + H2O + H(+)</text>
        <dbReference type="Rhea" id="RHEA:58520"/>
        <dbReference type="Rhea" id="RHEA-COMP:11964"/>
        <dbReference type="Rhea" id="RHEA-COMP:11965"/>
        <dbReference type="ChEBI" id="CHEBI:15377"/>
        <dbReference type="ChEBI" id="CHEBI:15378"/>
        <dbReference type="ChEBI" id="CHEBI:15379"/>
        <dbReference type="ChEBI" id="CHEBI:15740"/>
        <dbReference type="ChEBI" id="CHEBI:17037"/>
        <dbReference type="ChEBI" id="CHEBI:57618"/>
        <dbReference type="ChEBI" id="CHEBI:58210"/>
        <dbReference type="ChEBI" id="CHEBI:142754"/>
        <dbReference type="EC" id="1.14.19.80"/>
    </reaction>
    <physiologicalReaction direction="left-to-right" evidence="5 6">
        <dbReference type="Rhea" id="RHEA:58521"/>
    </physiologicalReaction>
</comment>
<comment type="catalytic activity">
    <reaction evidence="6">
        <text>(19E)-geissoschizine + reduced [NADPH--hemoprotein reductase] + O2 = 3,17-didehydrostemmadenine + oxidized [NADPH--hemoprotein reductase] + 2 H2O</text>
        <dbReference type="Rhea" id="RHEA:58516"/>
        <dbReference type="Rhea" id="RHEA-COMP:11964"/>
        <dbReference type="Rhea" id="RHEA-COMP:11965"/>
        <dbReference type="ChEBI" id="CHEBI:15377"/>
        <dbReference type="ChEBI" id="CHEBI:15379"/>
        <dbReference type="ChEBI" id="CHEBI:17037"/>
        <dbReference type="ChEBI" id="CHEBI:57618"/>
        <dbReference type="ChEBI" id="CHEBI:58210"/>
        <dbReference type="ChEBI" id="CHEBI:142668"/>
    </reaction>
    <physiologicalReaction direction="left-to-right" evidence="6">
        <dbReference type="Rhea" id="RHEA:58517"/>
    </physiologicalReaction>
</comment>
<comment type="cofactor">
    <cofactor evidence="1">
        <name>heme</name>
        <dbReference type="ChEBI" id="CHEBI:30413"/>
    </cofactor>
</comment>
<comment type="pathway">
    <text evidence="6">Alkaloid biosynthesis.</text>
</comment>
<comment type="subcellular location">
    <subcellularLocation>
        <location evidence="2">Membrane</location>
        <topology evidence="2">Single-pass membrane protein</topology>
    </subcellularLocation>
</comment>
<comment type="tissue specificity">
    <text evidence="4 7">Expressed in leaf epidermis (PubMed:24710322, PubMed:30256480). Also present in the leaf internal phloem-associated parenchyma (IPAP) inside the mesophyll (PubMed:24710322).</text>
</comment>
<comment type="disruption phenotype">
    <text evidence="6">Reduced levels of catharanthine, vindoline and ajmalicine, but accumulation of their precursor 19E-geissoschizine and its derivatives pericyclivine and perivine.</text>
</comment>
<comment type="similarity">
    <text evidence="12">Belongs to the cytochrome P450 family.</text>
</comment>
<accession>I1TEM0</accession>
<dbReference type="EC" id="1.14.19.80" evidence="5 13"/>
<dbReference type="EMBL" id="JN613015">
    <property type="protein sequence ID" value="AEX07770.1"/>
    <property type="molecule type" value="mRNA"/>
</dbReference>
<dbReference type="EMBL" id="KF302072">
    <property type="protein sequence ID" value="AHK60839.1"/>
    <property type="molecule type" value="mRNA"/>
</dbReference>
<dbReference type="EMBL" id="MF770508">
    <property type="protein sequence ID" value="AVM85916.1"/>
    <property type="molecule type" value="mRNA"/>
</dbReference>
<dbReference type="SMR" id="I1TEM0"/>
<dbReference type="GlyCosmos" id="I1TEM0">
    <property type="glycosylation" value="1 site, No reported glycans"/>
</dbReference>
<dbReference type="KEGG" id="ag:AVM85916"/>
<dbReference type="OrthoDB" id="2789670at2759"/>
<dbReference type="BioCyc" id="MetaCyc:MONOMER-20645"/>
<dbReference type="GO" id="GO:0016020">
    <property type="term" value="C:membrane"/>
    <property type="evidence" value="ECO:0007669"/>
    <property type="project" value="UniProtKB-SubCell"/>
</dbReference>
<dbReference type="GO" id="GO:0020037">
    <property type="term" value="F:heme binding"/>
    <property type="evidence" value="ECO:0007669"/>
    <property type="project" value="InterPro"/>
</dbReference>
<dbReference type="GO" id="GO:0005506">
    <property type="term" value="F:iron ion binding"/>
    <property type="evidence" value="ECO:0007669"/>
    <property type="project" value="InterPro"/>
</dbReference>
<dbReference type="GO" id="GO:0004497">
    <property type="term" value="F:monooxygenase activity"/>
    <property type="evidence" value="ECO:0000314"/>
    <property type="project" value="UniProtKB"/>
</dbReference>
<dbReference type="GO" id="GO:0016705">
    <property type="term" value="F:oxidoreductase activity, acting on paired donors, with incorporation or reduction of molecular oxygen"/>
    <property type="evidence" value="ECO:0007669"/>
    <property type="project" value="InterPro"/>
</dbReference>
<dbReference type="GO" id="GO:0009821">
    <property type="term" value="P:alkaloid biosynthetic process"/>
    <property type="evidence" value="ECO:0000314"/>
    <property type="project" value="UniProtKB"/>
</dbReference>
<dbReference type="GO" id="GO:0035834">
    <property type="term" value="P:indole alkaloid metabolic process"/>
    <property type="evidence" value="ECO:0000314"/>
    <property type="project" value="UniProtKB"/>
</dbReference>
<dbReference type="CDD" id="cd11072">
    <property type="entry name" value="CYP71-like"/>
    <property type="match status" value="1"/>
</dbReference>
<dbReference type="FunFam" id="1.10.630.10:FF:000043">
    <property type="entry name" value="Cytochrome P450 99A2"/>
    <property type="match status" value="1"/>
</dbReference>
<dbReference type="Gene3D" id="1.10.630.10">
    <property type="entry name" value="Cytochrome P450"/>
    <property type="match status" value="1"/>
</dbReference>
<dbReference type="InterPro" id="IPR001128">
    <property type="entry name" value="Cyt_P450"/>
</dbReference>
<dbReference type="InterPro" id="IPR017972">
    <property type="entry name" value="Cyt_P450_CS"/>
</dbReference>
<dbReference type="InterPro" id="IPR002401">
    <property type="entry name" value="Cyt_P450_E_grp-I"/>
</dbReference>
<dbReference type="InterPro" id="IPR036396">
    <property type="entry name" value="Cyt_P450_sf"/>
</dbReference>
<dbReference type="PANTHER" id="PTHR47955:SF8">
    <property type="entry name" value="CYTOCHROME P450 71D11-LIKE"/>
    <property type="match status" value="1"/>
</dbReference>
<dbReference type="PANTHER" id="PTHR47955">
    <property type="entry name" value="CYTOCHROME P450 FAMILY 71 PROTEIN"/>
    <property type="match status" value="1"/>
</dbReference>
<dbReference type="Pfam" id="PF00067">
    <property type="entry name" value="p450"/>
    <property type="match status" value="1"/>
</dbReference>
<dbReference type="PRINTS" id="PR00463">
    <property type="entry name" value="EP450I"/>
</dbReference>
<dbReference type="SUPFAM" id="SSF48264">
    <property type="entry name" value="Cytochrome P450"/>
    <property type="match status" value="1"/>
</dbReference>
<dbReference type="PROSITE" id="PS00086">
    <property type="entry name" value="CYTOCHROME_P450"/>
    <property type="match status" value="1"/>
</dbReference>
<sequence length="501" mass="57214">MEFSFSSPALYIVYFLLFFVVRQLLKPKSKKKLPPGPRTLPLIGNLHQLSGPLPHRTLKNLSDKHGPLMHVKMGERSAIIVSDARMAKIVLHNNGLAVADRSVNTVASIMTYNSLGVTFAQYGDYLTKLRQIYTLELLSQKKVRSFYSCFEDELDTFVKSIKSNVGQPMVLYEKASAYLYATICRTIFGSVCKEKEKMIKIVKKTSLLSGTPLRLEDLFPSMSIFCRFSKTLNQLRGLLQEMDDILEEIIVEREKASEVSKEAKDDEDMLSVLLRHKWYNPSGAKFRITNADIKAIIFELILAATLSVADVTEWAMVEILRDPKSLKKVYEEVRGICKEKKRVTGYDVEKMEFMRLCVKESTRIHPAAPLLVPRECREDFEVDGYTVPKGAWVITNCWAVQMDPTVWPEPEKFDPERYIRNPMDFYGSNFELIPFGTGRRGCPGILYGVTNAEFMLAAMFYHFDWEIADGKKPEEIDLTEDFGAGCIMKYPLKLVPHLVND</sequence>
<name>GO_CATRO</name>